<protein>
    <recommendedName>
        <fullName>Putative gene 52 protein</fullName>
    </recommendedName>
</protein>
<gene>
    <name type="primary">52</name>
</gene>
<organismHost>
    <name type="scientific">Bacillus subtilis</name>
    <dbReference type="NCBI Taxonomy" id="1423"/>
</organismHost>
<sequence>MTHFISIATYIYALVSAGFIGGWHDEESWIKDTEYEHGGYHMIIDTPAVVNYSLEYGNYQWIFQKYMKEGKVTVERFYRNSLDIPKEILTDEALAFIKDWDENANEYELHAGEGVLYFKYEGEEKGYVIPMAYAGEIMFVPDEDAEKALEIINSQKKY</sequence>
<feature type="chain" id="PRO_0000106158" description="Putative gene 52 protein">
    <location>
        <begin position="1"/>
        <end position="158"/>
    </location>
</feature>
<name>GP52_BPSP1</name>
<dbReference type="EMBL" id="AF031901">
    <property type="protein sequence ID" value="AAC29021.1"/>
    <property type="molecule type" value="Genomic_DNA"/>
</dbReference>
<dbReference type="RefSeq" id="YP_002300296.1">
    <property type="nucleotide sequence ID" value="NC_011421.1"/>
</dbReference>
<dbReference type="GeneID" id="7009009"/>
<dbReference type="KEGG" id="vg:7009009"/>
<reference key="1">
    <citation type="journal article" date="1998" name="Virology">
        <title>Genes and regulatory sites of the 'host-takeover module' in the terminal redundancy of Bacillus subtilis bacteriophage SPO1.</title>
        <authorList>
            <person name="Stewart C.R."/>
            <person name="Gaslightwala I."/>
            <person name="Hinata K."/>
            <person name="Krolikowski K.A."/>
            <person name="Needleman D.S."/>
            <person name="Peng A.S.-Y."/>
            <person name="Peterman M.A."/>
            <person name="Tobias A."/>
            <person name="Wei P."/>
        </authorList>
    </citation>
    <scope>NUCLEOTIDE SEQUENCE [GENOMIC DNA]</scope>
</reference>
<accession>O48406</accession>
<proteinExistence type="predicted"/>
<organism>
    <name type="scientific">Bacillus phage SP01</name>
    <name type="common">Bacteriophage SP01</name>
    <dbReference type="NCBI Taxonomy" id="2884427"/>
    <lineage>
        <taxon>Viruses</taxon>
        <taxon>Duplodnaviria</taxon>
        <taxon>Heunggongvirae</taxon>
        <taxon>Uroviricota</taxon>
        <taxon>Caudoviricetes</taxon>
        <taxon>Herelleviridae</taxon>
        <taxon>Spounavirinae</taxon>
        <taxon>Okubovirus</taxon>
        <taxon>Okubovirus SPO1</taxon>
    </lineage>
</organism>